<comment type="function">
    <text evidence="1">Translocates 4-amino-4-deoxy-L-arabinose-phosphoundecaprenol (alpha-L-Ara4N-phosphoundecaprenol) from the cytoplasmic to the periplasmic side of the inner membrane.</text>
</comment>
<comment type="pathway">
    <text evidence="1">Bacterial outer membrane biogenesis; lipopolysaccharide biosynthesis.</text>
</comment>
<comment type="subunit">
    <text evidence="1">Heterodimer of ArnE and ArnF.</text>
</comment>
<comment type="subcellular location">
    <subcellularLocation>
        <location evidence="1">Cell inner membrane</location>
        <topology evidence="1">Multi-pass membrane protein</topology>
    </subcellularLocation>
</comment>
<comment type="similarity">
    <text evidence="1">Belongs to the ArnE family.</text>
</comment>
<organism>
    <name type="scientific">Pseudomonas paraeruginosa (strain DSM 24068 / PA7)</name>
    <name type="common">Pseudomonas aeruginosa (strain PA7)</name>
    <dbReference type="NCBI Taxonomy" id="381754"/>
    <lineage>
        <taxon>Bacteria</taxon>
        <taxon>Pseudomonadati</taxon>
        <taxon>Pseudomonadota</taxon>
        <taxon>Gammaproteobacteria</taxon>
        <taxon>Pseudomonadales</taxon>
        <taxon>Pseudomonadaceae</taxon>
        <taxon>Pseudomonas</taxon>
        <taxon>Pseudomonas paraeruginosa</taxon>
    </lineage>
</organism>
<protein>
    <recommendedName>
        <fullName evidence="1">Probable 4-amino-4-deoxy-L-arabinose-phosphoundecaprenol flippase subunit ArnE</fullName>
        <shortName evidence="1">L-Ara4N-phosphoundecaprenol flippase subunit ArnE</shortName>
    </recommendedName>
    <alternativeName>
        <fullName evidence="1">Undecaprenyl phosphate-aminoarabinose flippase subunit ArnE</fullName>
    </alternativeName>
</protein>
<dbReference type="EMBL" id="CP000744">
    <property type="protein sequence ID" value="ABR85603.1"/>
    <property type="molecule type" value="Genomic_DNA"/>
</dbReference>
<dbReference type="RefSeq" id="WP_012074755.1">
    <property type="nucleotide sequence ID" value="NC_009656.1"/>
</dbReference>
<dbReference type="SMR" id="A6V1N7"/>
<dbReference type="KEGG" id="pap:PSPA7_1588"/>
<dbReference type="HOGENOM" id="CLU_131462_5_1_6"/>
<dbReference type="UniPathway" id="UPA00030"/>
<dbReference type="Proteomes" id="UP000001582">
    <property type="component" value="Chromosome"/>
</dbReference>
<dbReference type="GO" id="GO:0005886">
    <property type="term" value="C:plasma membrane"/>
    <property type="evidence" value="ECO:0007669"/>
    <property type="project" value="UniProtKB-SubCell"/>
</dbReference>
<dbReference type="GO" id="GO:1901505">
    <property type="term" value="F:carbohydrate derivative transmembrane transporter activity"/>
    <property type="evidence" value="ECO:0007669"/>
    <property type="project" value="InterPro"/>
</dbReference>
<dbReference type="GO" id="GO:0009245">
    <property type="term" value="P:lipid A biosynthetic process"/>
    <property type="evidence" value="ECO:0007669"/>
    <property type="project" value="UniProtKB-UniRule"/>
</dbReference>
<dbReference type="GO" id="GO:0009103">
    <property type="term" value="P:lipopolysaccharide biosynthetic process"/>
    <property type="evidence" value="ECO:0007669"/>
    <property type="project" value="UniProtKB-UniRule"/>
</dbReference>
<dbReference type="FunFam" id="1.10.3730.20:FF:000002">
    <property type="entry name" value="Probable 4-amino-4-deoxy-L-arabinose-phosphoundecaprenol flippase subunit ArnE"/>
    <property type="match status" value="1"/>
</dbReference>
<dbReference type="Gene3D" id="1.10.3730.20">
    <property type="match status" value="1"/>
</dbReference>
<dbReference type="HAMAP" id="MF_01869">
    <property type="entry name" value="Flippase_ArnE"/>
    <property type="match status" value="1"/>
</dbReference>
<dbReference type="InterPro" id="IPR000620">
    <property type="entry name" value="EamA_dom"/>
</dbReference>
<dbReference type="InterPro" id="IPR022883">
    <property type="entry name" value="Flippase_ArnE"/>
</dbReference>
<dbReference type="InterPro" id="IPR000390">
    <property type="entry name" value="Small_drug/metabolite_transptr"/>
</dbReference>
<dbReference type="PANTHER" id="PTHR30561:SF23">
    <property type="entry name" value="4-AMINO-4-DEOXY-L-ARABINOSE-PHOSPHOUNDECAPRENOL FLIPPASE SUBUNIT ARNE-RELATED"/>
    <property type="match status" value="1"/>
</dbReference>
<dbReference type="PANTHER" id="PTHR30561">
    <property type="entry name" value="SMR FAMILY PROTON-DEPENDENT DRUG EFFLUX TRANSPORTER SUGE"/>
    <property type="match status" value="1"/>
</dbReference>
<dbReference type="Pfam" id="PF00892">
    <property type="entry name" value="EamA"/>
    <property type="match status" value="1"/>
</dbReference>
<dbReference type="SUPFAM" id="SSF103481">
    <property type="entry name" value="Multidrug resistance efflux transporter EmrE"/>
    <property type="match status" value="1"/>
</dbReference>
<keyword id="KW-0997">Cell inner membrane</keyword>
<keyword id="KW-1003">Cell membrane</keyword>
<keyword id="KW-0441">Lipid A biosynthesis</keyword>
<keyword id="KW-0444">Lipid biosynthesis</keyword>
<keyword id="KW-0443">Lipid metabolism</keyword>
<keyword id="KW-0448">Lipopolysaccharide biosynthesis</keyword>
<keyword id="KW-0472">Membrane</keyword>
<keyword id="KW-0812">Transmembrane</keyword>
<keyword id="KW-1133">Transmembrane helix</keyword>
<keyword id="KW-0813">Transport</keyword>
<evidence type="ECO:0000255" key="1">
    <source>
        <dbReference type="HAMAP-Rule" id="MF_01869"/>
    </source>
</evidence>
<name>ARNE_PSEP7</name>
<gene>
    <name evidence="1" type="primary">arnE</name>
    <name type="ordered locus">PSPA7_1588</name>
</gene>
<proteinExistence type="inferred from homology"/>
<sequence length="115" mass="12493">MSAALLLATLLMTGLGQVAQKLTVEHWRLVAADGWAARLRSPWPWLALLALGLGLACWLLLLQRVEVGSAYPMLALNFVLVTLVARFVFDEPVDRRHLAGLLLIVAGVALLGRQA</sequence>
<accession>A6V1N7</accession>
<feature type="chain" id="PRO_0000382983" description="Probable 4-amino-4-deoxy-L-arabinose-phosphoundecaprenol flippase subunit ArnE">
    <location>
        <begin position="1"/>
        <end position="115"/>
    </location>
</feature>
<feature type="transmembrane region" description="Helical" evidence="1">
    <location>
        <begin position="42"/>
        <end position="62"/>
    </location>
</feature>
<feature type="transmembrane region" description="Helical" evidence="1">
    <location>
        <begin position="65"/>
        <end position="85"/>
    </location>
</feature>
<feature type="transmembrane region" description="Helical" evidence="1">
    <location>
        <begin position="93"/>
        <end position="112"/>
    </location>
</feature>
<feature type="domain" description="EamA" evidence="1">
    <location>
        <begin position="46"/>
        <end position="113"/>
    </location>
</feature>
<reference key="1">
    <citation type="submission" date="2007-06" db="EMBL/GenBank/DDBJ databases">
        <authorList>
            <person name="Dodson R.J."/>
            <person name="Harkins D."/>
            <person name="Paulsen I.T."/>
        </authorList>
    </citation>
    <scope>NUCLEOTIDE SEQUENCE [LARGE SCALE GENOMIC DNA]</scope>
    <source>
        <strain>DSM 24068 / PA7</strain>
    </source>
</reference>